<protein>
    <recommendedName>
        <fullName evidence="2">Transaldolase</fullName>
        <ecNumber evidence="2">2.2.1.2</ecNumber>
    </recommendedName>
</protein>
<organism>
    <name type="scientific">Hamiltonella defensa subsp. Acyrthosiphon pisum (strain 5AT)</name>
    <dbReference type="NCBI Taxonomy" id="572265"/>
    <lineage>
        <taxon>Bacteria</taxon>
        <taxon>Pseudomonadati</taxon>
        <taxon>Pseudomonadota</taxon>
        <taxon>Gammaproteobacteria</taxon>
        <taxon>Enterobacterales</taxon>
        <taxon>Enterobacteriaceae</taxon>
        <taxon>aphid secondary symbionts</taxon>
        <taxon>Candidatus Hamiltonella</taxon>
    </lineage>
</organism>
<comment type="function">
    <text evidence="2">Transaldolase is important for the balance of metabolites in the pentose-phosphate pathway.</text>
</comment>
<comment type="catalytic activity">
    <reaction evidence="2">
        <text>D-sedoheptulose 7-phosphate + D-glyceraldehyde 3-phosphate = D-erythrose 4-phosphate + beta-D-fructose 6-phosphate</text>
        <dbReference type="Rhea" id="RHEA:17053"/>
        <dbReference type="ChEBI" id="CHEBI:16897"/>
        <dbReference type="ChEBI" id="CHEBI:57483"/>
        <dbReference type="ChEBI" id="CHEBI:57634"/>
        <dbReference type="ChEBI" id="CHEBI:59776"/>
        <dbReference type="EC" id="2.2.1.2"/>
    </reaction>
</comment>
<comment type="pathway">
    <text evidence="2">Carbohydrate degradation; pentose phosphate pathway; D-glyceraldehyde 3-phosphate and beta-D-fructose 6-phosphate from D-ribose 5-phosphate and D-xylulose 5-phosphate (non-oxidative stage): step 2/3.</text>
</comment>
<comment type="subunit">
    <text evidence="1">Homodimer.</text>
</comment>
<comment type="subcellular location">
    <subcellularLocation>
        <location evidence="2">Cytoplasm</location>
    </subcellularLocation>
</comment>
<comment type="similarity">
    <text evidence="2">Belongs to the transaldolase family. Type 1 subfamily.</text>
</comment>
<name>TAL_HAMD5</name>
<feature type="chain" id="PRO_1000206464" description="Transaldolase">
    <location>
        <begin position="1"/>
        <end position="318"/>
    </location>
</feature>
<feature type="active site" description="Schiff-base intermediate with substrate" evidence="2">
    <location>
        <position position="132"/>
    </location>
</feature>
<keyword id="KW-0963">Cytoplasm</keyword>
<keyword id="KW-0570">Pentose shunt</keyword>
<keyword id="KW-0704">Schiff base</keyword>
<keyword id="KW-0808">Transferase</keyword>
<dbReference type="EC" id="2.2.1.2" evidence="2"/>
<dbReference type="EMBL" id="CP001277">
    <property type="protein sequence ID" value="ACQ67455.1"/>
    <property type="molecule type" value="Genomic_DNA"/>
</dbReference>
<dbReference type="SMR" id="C4K4G2"/>
<dbReference type="STRING" id="572265.HDEF_0722"/>
<dbReference type="KEGG" id="hde:HDEF_0722"/>
<dbReference type="eggNOG" id="COG0176">
    <property type="taxonomic scope" value="Bacteria"/>
</dbReference>
<dbReference type="HOGENOM" id="CLU_047470_4_0_6"/>
<dbReference type="UniPathway" id="UPA00115">
    <property type="reaction ID" value="UER00414"/>
</dbReference>
<dbReference type="Proteomes" id="UP000002334">
    <property type="component" value="Chromosome"/>
</dbReference>
<dbReference type="GO" id="GO:0005829">
    <property type="term" value="C:cytosol"/>
    <property type="evidence" value="ECO:0007669"/>
    <property type="project" value="TreeGrafter"/>
</dbReference>
<dbReference type="GO" id="GO:0004801">
    <property type="term" value="F:transaldolase activity"/>
    <property type="evidence" value="ECO:0000250"/>
    <property type="project" value="UniProtKB"/>
</dbReference>
<dbReference type="GO" id="GO:0005975">
    <property type="term" value="P:carbohydrate metabolic process"/>
    <property type="evidence" value="ECO:0007669"/>
    <property type="project" value="InterPro"/>
</dbReference>
<dbReference type="GO" id="GO:0006098">
    <property type="term" value="P:pentose-phosphate shunt"/>
    <property type="evidence" value="ECO:0007669"/>
    <property type="project" value="UniProtKB-UniRule"/>
</dbReference>
<dbReference type="CDD" id="cd00957">
    <property type="entry name" value="Transaldolase_TalAB"/>
    <property type="match status" value="1"/>
</dbReference>
<dbReference type="FunFam" id="3.20.20.70:FF:000002">
    <property type="entry name" value="Transaldolase"/>
    <property type="match status" value="1"/>
</dbReference>
<dbReference type="Gene3D" id="3.20.20.70">
    <property type="entry name" value="Aldolase class I"/>
    <property type="match status" value="1"/>
</dbReference>
<dbReference type="HAMAP" id="MF_00492">
    <property type="entry name" value="Transaldolase_1"/>
    <property type="match status" value="1"/>
</dbReference>
<dbReference type="InterPro" id="IPR013785">
    <property type="entry name" value="Aldolase_TIM"/>
</dbReference>
<dbReference type="InterPro" id="IPR001585">
    <property type="entry name" value="TAL/FSA"/>
</dbReference>
<dbReference type="InterPro" id="IPR004730">
    <property type="entry name" value="Transaldolase_1"/>
</dbReference>
<dbReference type="InterPro" id="IPR018225">
    <property type="entry name" value="Transaldolase_AS"/>
</dbReference>
<dbReference type="NCBIfam" id="NF009001">
    <property type="entry name" value="PRK12346.1"/>
    <property type="match status" value="1"/>
</dbReference>
<dbReference type="NCBIfam" id="TIGR00874">
    <property type="entry name" value="talAB"/>
    <property type="match status" value="1"/>
</dbReference>
<dbReference type="PANTHER" id="PTHR10683">
    <property type="entry name" value="TRANSALDOLASE"/>
    <property type="match status" value="1"/>
</dbReference>
<dbReference type="PANTHER" id="PTHR10683:SF18">
    <property type="entry name" value="TRANSALDOLASE"/>
    <property type="match status" value="1"/>
</dbReference>
<dbReference type="Pfam" id="PF00923">
    <property type="entry name" value="TAL_FSA"/>
    <property type="match status" value="1"/>
</dbReference>
<dbReference type="SUPFAM" id="SSF51569">
    <property type="entry name" value="Aldolase"/>
    <property type="match status" value="1"/>
</dbReference>
<dbReference type="PROSITE" id="PS00958">
    <property type="entry name" value="TRANSALDOLASE_2"/>
    <property type="match status" value="1"/>
</dbReference>
<evidence type="ECO:0000250" key="1"/>
<evidence type="ECO:0000255" key="2">
    <source>
        <dbReference type="HAMAP-Rule" id="MF_00492"/>
    </source>
</evidence>
<accession>C4K4G2</accession>
<gene>
    <name evidence="2" type="primary">tal</name>
    <name type="ordered locus">HDEF_0722</name>
</gene>
<proteinExistence type="inferred from homology"/>
<reference key="1">
    <citation type="journal article" date="2009" name="Proc. Natl. Acad. Sci. U.S.A.">
        <title>Hamiltonella defensa, genome evolution of protective bacterial endosymbiont from pathogenic ancestors.</title>
        <authorList>
            <person name="Degnan P.H."/>
            <person name="Yu Y."/>
            <person name="Sisneros N."/>
            <person name="Wing R.A."/>
            <person name="Moran N.A."/>
        </authorList>
    </citation>
    <scope>NUCLEOTIDE SEQUENCE [LARGE SCALE GENOMIC DNA]</scope>
    <source>
        <strain>5AT</strain>
    </source>
</reference>
<sequence>MMNKLQALRQFSTIVADTGDISAIQSYQPEDTTTNPSLILNATKIPAYRHLIDRSVAWAKRQSSDPKQHQIDATDKLAVDIGVEILKLIPGRISTEVDACLSYDIHASIEKAQKLISLYHEADIHKDRILIKLAATWQGIRAAEALEKLGIRCNLTLLFSFAQARACAEAGVFLISPFVGRILDWYKKNSDTKEFLPTQDPRVLSVQKIYHYYKKHGYETVVMGASFRNTAEILELAGCDRLTISPALLQELSEQQGTVEQKLVFRGALKEKPTPLTESEFYWQHNQDPMAVEKLSEGIRKFAEDQEKLKNVISNLLA</sequence>